<feature type="initiator methionine" description="Removed" evidence="9">
    <location>
        <position position="1"/>
    </location>
</feature>
<feature type="chain" id="PRO_0000071411" description="Serine/threonine-protein phosphatase 2A 65 kDa regulatory subunit A gamma isoform">
    <location>
        <begin position="2"/>
        <end position="587"/>
    </location>
</feature>
<feature type="repeat" description="HEAT 1">
    <location>
        <begin position="2"/>
        <end position="42"/>
    </location>
</feature>
<feature type="repeat" description="HEAT 2">
    <location>
        <begin position="44"/>
        <end position="80"/>
    </location>
</feature>
<feature type="repeat" description="HEAT 3">
    <location>
        <begin position="81"/>
        <end position="119"/>
    </location>
</feature>
<feature type="repeat" description="HEAT 4">
    <location>
        <begin position="158"/>
        <end position="194"/>
    </location>
</feature>
<feature type="repeat" description="HEAT 5">
    <location>
        <begin position="197"/>
        <end position="235"/>
    </location>
</feature>
<feature type="repeat" description="HEAT 6">
    <location>
        <begin position="236"/>
        <end position="274"/>
    </location>
</feature>
<feature type="repeat" description="HEAT 7">
    <location>
        <begin position="276"/>
        <end position="313"/>
    </location>
</feature>
<feature type="repeat" description="HEAT 8">
    <location>
        <begin position="314"/>
        <end position="352"/>
    </location>
</feature>
<feature type="repeat" description="HEAT 9">
    <location>
        <begin position="353"/>
        <end position="391"/>
    </location>
</feature>
<feature type="repeat" description="HEAT 10">
    <location>
        <begin position="393"/>
        <end position="430"/>
    </location>
</feature>
<feature type="repeat" description="HEAT 11">
    <location>
        <begin position="432"/>
        <end position="469"/>
    </location>
</feature>
<feature type="repeat" description="HEAT 12">
    <location>
        <begin position="470"/>
        <end position="508"/>
    </location>
</feature>
<feature type="repeat" description="HEAT 13">
    <location>
        <begin position="509"/>
        <end position="547"/>
    </location>
</feature>
<feature type="repeat" description="HEAT 14">
    <location>
        <begin position="549"/>
        <end position="586"/>
    </location>
</feature>
<feature type="modified residue" description="N-acetylserine" evidence="9">
    <location>
        <position position="2"/>
    </location>
</feature>
<feature type="sequence conflict" description="In Ref. 4; CAA57529." evidence="8" ref="4">
    <original>C</original>
    <variation>R</variation>
    <location>
        <position position="290"/>
    </location>
</feature>
<dbReference type="EMBL" id="AC011810">
    <property type="protein sequence ID" value="AAG09551.1"/>
    <property type="status" value="ALT_SEQ"/>
    <property type="molecule type" value="Genomic_DNA"/>
</dbReference>
<dbReference type="EMBL" id="CP002684">
    <property type="protein sequence ID" value="AEE28998.1"/>
    <property type="molecule type" value="Genomic_DNA"/>
</dbReference>
<dbReference type="EMBL" id="CP002684">
    <property type="protein sequence ID" value="AEE29000.1"/>
    <property type="molecule type" value="Genomic_DNA"/>
</dbReference>
<dbReference type="EMBL" id="AY099760">
    <property type="protein sequence ID" value="AAM20611.1"/>
    <property type="molecule type" value="mRNA"/>
</dbReference>
<dbReference type="EMBL" id="BT002601">
    <property type="protein sequence ID" value="AAO00961.1"/>
    <property type="molecule type" value="mRNA"/>
</dbReference>
<dbReference type="EMBL" id="X82003">
    <property type="protein sequence ID" value="CAA57529.1"/>
    <property type="molecule type" value="mRNA"/>
</dbReference>
<dbReference type="PIR" id="H86267">
    <property type="entry name" value="H86267"/>
</dbReference>
<dbReference type="PIR" id="S51809">
    <property type="entry name" value="S51809"/>
</dbReference>
<dbReference type="RefSeq" id="NP_001184981.1">
    <molecule id="Q38951-1"/>
    <property type="nucleotide sequence ID" value="NM_001198052.1"/>
</dbReference>
<dbReference type="RefSeq" id="NP_172790.2">
    <molecule id="Q38951-1"/>
    <property type="nucleotide sequence ID" value="NM_101203.5"/>
</dbReference>
<dbReference type="SMR" id="Q38951"/>
<dbReference type="BioGRID" id="23132">
    <property type="interactions" value="46"/>
</dbReference>
<dbReference type="FunCoup" id="Q38951">
    <property type="interactions" value="1390"/>
</dbReference>
<dbReference type="IntAct" id="Q38951">
    <property type="interactions" value="6"/>
</dbReference>
<dbReference type="STRING" id="3702.Q38951"/>
<dbReference type="iPTMnet" id="Q38951"/>
<dbReference type="PaxDb" id="3702-AT1G13320.3"/>
<dbReference type="ProteomicsDB" id="245113">
    <molecule id="Q38951-1"/>
</dbReference>
<dbReference type="EnsemblPlants" id="AT1G13320.1">
    <molecule id="Q38951-1"/>
    <property type="protein sequence ID" value="AT1G13320.1"/>
    <property type="gene ID" value="AT1G13320"/>
</dbReference>
<dbReference type="EnsemblPlants" id="AT1G13320.3">
    <molecule id="Q38951-1"/>
    <property type="protein sequence ID" value="AT1G13320.3"/>
    <property type="gene ID" value="AT1G13320"/>
</dbReference>
<dbReference type="GeneID" id="837892"/>
<dbReference type="Gramene" id="AT1G13320.1">
    <molecule id="Q38951-1"/>
    <property type="protein sequence ID" value="AT1G13320.1"/>
    <property type="gene ID" value="AT1G13320"/>
</dbReference>
<dbReference type="Gramene" id="AT1G13320.3">
    <molecule id="Q38951-1"/>
    <property type="protein sequence ID" value="AT1G13320.3"/>
    <property type="gene ID" value="AT1G13320"/>
</dbReference>
<dbReference type="KEGG" id="ath:AT1G13320"/>
<dbReference type="Araport" id="AT1G13320"/>
<dbReference type="TAIR" id="AT1G13320">
    <property type="gene designation" value="PP2AA3"/>
</dbReference>
<dbReference type="eggNOG" id="KOG0211">
    <property type="taxonomic scope" value="Eukaryota"/>
</dbReference>
<dbReference type="InParanoid" id="Q38951"/>
<dbReference type="OMA" id="NTLCMTW"/>
<dbReference type="PhylomeDB" id="Q38951"/>
<dbReference type="CD-CODE" id="4299E36E">
    <property type="entry name" value="Nucleolus"/>
</dbReference>
<dbReference type="PRO" id="PR:Q38951"/>
<dbReference type="Proteomes" id="UP000006548">
    <property type="component" value="Chromosome 1"/>
</dbReference>
<dbReference type="ExpressionAtlas" id="Q38951">
    <property type="expression patterns" value="baseline and differential"/>
</dbReference>
<dbReference type="GO" id="GO:0005829">
    <property type="term" value="C:cytosol"/>
    <property type="evidence" value="ECO:0000314"/>
    <property type="project" value="UniProtKB"/>
</dbReference>
<dbReference type="GO" id="GO:0005576">
    <property type="term" value="C:extracellular region"/>
    <property type="evidence" value="ECO:0007005"/>
    <property type="project" value="TAIR"/>
</dbReference>
<dbReference type="GO" id="GO:0005634">
    <property type="term" value="C:nucleus"/>
    <property type="evidence" value="ECO:0000314"/>
    <property type="project" value="UniProtKB"/>
</dbReference>
<dbReference type="GO" id="GO:0009505">
    <property type="term" value="C:plant-type cell wall"/>
    <property type="evidence" value="ECO:0007005"/>
    <property type="project" value="TAIR"/>
</dbReference>
<dbReference type="GO" id="GO:0005886">
    <property type="term" value="C:plasma membrane"/>
    <property type="evidence" value="ECO:0007005"/>
    <property type="project" value="TAIR"/>
</dbReference>
<dbReference type="GO" id="GO:0000159">
    <property type="term" value="C:protein phosphatase type 2A complex"/>
    <property type="evidence" value="ECO:0000304"/>
    <property type="project" value="TAIR"/>
</dbReference>
<dbReference type="GO" id="GO:0042325">
    <property type="term" value="P:regulation of phosphorylation"/>
    <property type="evidence" value="ECO:0000250"/>
    <property type="project" value="TAIR"/>
</dbReference>
<dbReference type="FunFam" id="1.25.10.10:FF:000062">
    <property type="entry name" value="Serine/threonine-protein phosphatase 2A regulatory subunit A alpha isoform"/>
    <property type="match status" value="1"/>
</dbReference>
<dbReference type="Gene3D" id="1.25.10.10">
    <property type="entry name" value="Leucine-rich Repeat Variant"/>
    <property type="match status" value="1"/>
</dbReference>
<dbReference type="InterPro" id="IPR011989">
    <property type="entry name" value="ARM-like"/>
</dbReference>
<dbReference type="InterPro" id="IPR016024">
    <property type="entry name" value="ARM-type_fold"/>
</dbReference>
<dbReference type="InterPro" id="IPR000357">
    <property type="entry name" value="HEAT"/>
</dbReference>
<dbReference type="InterPro" id="IPR021133">
    <property type="entry name" value="HEAT_type_2"/>
</dbReference>
<dbReference type="InterPro" id="IPR054573">
    <property type="entry name" value="PP2A/SF3B1-like_HEAT"/>
</dbReference>
<dbReference type="InterPro" id="IPR051023">
    <property type="entry name" value="PP2A_Regulatory_Subunit_A"/>
</dbReference>
<dbReference type="PANTHER" id="PTHR10648">
    <property type="entry name" value="SERINE/THREONINE-PROTEIN PHOSPHATASE PP2A 65 KDA REGULATORY SUBUNIT"/>
    <property type="match status" value="1"/>
</dbReference>
<dbReference type="PANTHER" id="PTHR10648:SF36">
    <property type="entry name" value="SERINE_THREONINE-PROTEIN PHOSPHATASE 2A 65 KDA REGULATORY SUBUNIT A BETA ISOFORM-RELATED"/>
    <property type="match status" value="1"/>
</dbReference>
<dbReference type="Pfam" id="PF02985">
    <property type="entry name" value="HEAT"/>
    <property type="match status" value="2"/>
</dbReference>
<dbReference type="Pfam" id="PF22646">
    <property type="entry name" value="PPP2R1A-like_HEAT"/>
    <property type="match status" value="1"/>
</dbReference>
<dbReference type="SUPFAM" id="SSF48371">
    <property type="entry name" value="ARM repeat"/>
    <property type="match status" value="1"/>
</dbReference>
<dbReference type="PROSITE" id="PS50077">
    <property type="entry name" value="HEAT_REPEAT"/>
    <property type="match status" value="12"/>
</dbReference>
<accession>Q38951</accession>
<accession>Q8LPH9</accession>
<accession>Q9FX65</accession>
<protein>
    <recommendedName>
        <fullName>Serine/threonine-protein phosphatase 2A 65 kDa regulatory subunit A gamma isoform</fullName>
        <shortName>AtA gamma</shortName>
        <shortName>PP2A, subunit A, gamma isoform</shortName>
    </recommendedName>
</protein>
<evidence type="ECO:0000250" key="1"/>
<evidence type="ECO:0000250" key="2">
    <source>
        <dbReference type="UniProtKB" id="P62714"/>
    </source>
</evidence>
<evidence type="ECO:0000269" key="3">
    <source>
    </source>
</evidence>
<evidence type="ECO:0000269" key="4">
    <source>
    </source>
</evidence>
<evidence type="ECO:0000269" key="5">
    <source>
    </source>
</evidence>
<evidence type="ECO:0000269" key="6">
    <source>
    </source>
</evidence>
<evidence type="ECO:0000269" key="7">
    <source>
    </source>
</evidence>
<evidence type="ECO:0000305" key="8"/>
<evidence type="ECO:0007744" key="9">
    <source>
    </source>
</evidence>
<gene>
    <name type="primary">PP2AA3</name>
    <name type="synonym">DF2</name>
    <name type="ordered locus">At1g13320</name>
    <name type="ORF">T6J4.8</name>
</gene>
<keyword id="KW-0007">Acetylation</keyword>
<keyword id="KW-0025">Alternative splicing</keyword>
<keyword id="KW-0963">Cytoplasm</keyword>
<keyword id="KW-0539">Nucleus</keyword>
<keyword id="KW-1185">Reference proteome</keyword>
<keyword id="KW-0677">Repeat</keyword>
<keyword id="KW-0832">Ubl conjugation</keyword>
<comment type="function">
    <text evidence="3">The A subunit of protein phosphatase 2A serves as a scaffolding molecule to coordinate the assembly of the catalytic subunit and a variable regulatory B subunit. Involved during developmental process such as seedling and floral developments. Seems to act as a negative regulator of PP2A catalytic activity.</text>
</comment>
<comment type="subunit">
    <text evidence="2 5 7">PP2A consists of a common heterodimeric core enzyme, composed of a 36 kDa catalytic subunit (subunit C) and a 65 kDa constant regulatory subunit (subunit A), that associates with a variety of regulatory subunits such as subunits B (the R2/B/PR55/B55, R3/B''/PR72/PR130/PR59 and R5/B'/B56 families) (By similarity). Interacts with CHIP (PubMed:16640601). Interacts with SRK2E/OST1 (PubMed:26175513).</text>
</comment>
<comment type="subcellular location">
    <subcellularLocation>
        <location evidence="6">Cytoplasm</location>
        <location evidence="6">Cytosol</location>
    </subcellularLocation>
    <subcellularLocation>
        <location evidence="6">Nucleus</location>
    </subcellularLocation>
</comment>
<comment type="alternative products">
    <event type="alternative splicing"/>
    <isoform>
        <id>Q38951-1</id>
        <name>1</name>
        <sequence type="displayed"/>
    </isoform>
    <text>A number of isoforms are produced. According to EST sequences.</text>
</comment>
<comment type="tissue specificity">
    <text evidence="3 4">Expressed ubiquitously at stable levels. However, higher protein levels in roots and flowers (at protein level).</text>
</comment>
<comment type="domain">
    <text evidence="1">Each HEAT repeat appears to consist of two alpha helices joined by a hydrophilic region, the intrarepeat loop. The repeat units may be arranged laterally to form a rod-like structure (By similarity).</text>
</comment>
<comment type="PTM">
    <text>Ubiquitinated. CHIP-mediated ubiquitination enhances phosphatase activity after an abiotic stress such as low temperature or darkness.</text>
</comment>
<comment type="miscellaneous">
    <text>Due to the stability of its transcription, PubMed:16166256 proposed this gene as a reference gene for transcript normalization.</text>
</comment>
<comment type="similarity">
    <text evidence="8">Belongs to the phosphatase 2A regulatory subunit A family.</text>
</comment>
<comment type="sequence caution" evidence="8">
    <conflict type="erroneous gene model prediction">
        <sequence resource="EMBL-CDS" id="AAG09551"/>
    </conflict>
</comment>
<reference key="1">
    <citation type="journal article" date="2000" name="Nature">
        <title>Sequence and analysis of chromosome 1 of the plant Arabidopsis thaliana.</title>
        <authorList>
            <person name="Theologis A."/>
            <person name="Ecker J.R."/>
            <person name="Palm C.J."/>
            <person name="Federspiel N.A."/>
            <person name="Kaul S."/>
            <person name="White O."/>
            <person name="Alonso J."/>
            <person name="Altafi H."/>
            <person name="Araujo R."/>
            <person name="Bowman C.L."/>
            <person name="Brooks S.Y."/>
            <person name="Buehler E."/>
            <person name="Chan A."/>
            <person name="Chao Q."/>
            <person name="Chen H."/>
            <person name="Cheuk R.F."/>
            <person name="Chin C.W."/>
            <person name="Chung M.K."/>
            <person name="Conn L."/>
            <person name="Conway A.B."/>
            <person name="Conway A.R."/>
            <person name="Creasy T.H."/>
            <person name="Dewar K."/>
            <person name="Dunn P."/>
            <person name="Etgu P."/>
            <person name="Feldblyum T.V."/>
            <person name="Feng J.-D."/>
            <person name="Fong B."/>
            <person name="Fujii C.Y."/>
            <person name="Gill J.E."/>
            <person name="Goldsmith A.D."/>
            <person name="Haas B."/>
            <person name="Hansen N.F."/>
            <person name="Hughes B."/>
            <person name="Huizar L."/>
            <person name="Hunter J.L."/>
            <person name="Jenkins J."/>
            <person name="Johnson-Hopson C."/>
            <person name="Khan S."/>
            <person name="Khaykin E."/>
            <person name="Kim C.J."/>
            <person name="Koo H.L."/>
            <person name="Kremenetskaia I."/>
            <person name="Kurtz D.B."/>
            <person name="Kwan A."/>
            <person name="Lam B."/>
            <person name="Langin-Hooper S."/>
            <person name="Lee A."/>
            <person name="Lee J.M."/>
            <person name="Lenz C.A."/>
            <person name="Li J.H."/>
            <person name="Li Y.-P."/>
            <person name="Lin X."/>
            <person name="Liu S.X."/>
            <person name="Liu Z.A."/>
            <person name="Luros J.S."/>
            <person name="Maiti R."/>
            <person name="Marziali A."/>
            <person name="Militscher J."/>
            <person name="Miranda M."/>
            <person name="Nguyen M."/>
            <person name="Nierman W.C."/>
            <person name="Osborne B.I."/>
            <person name="Pai G."/>
            <person name="Peterson J."/>
            <person name="Pham P.K."/>
            <person name="Rizzo M."/>
            <person name="Rooney T."/>
            <person name="Rowley D."/>
            <person name="Sakano H."/>
            <person name="Salzberg S.L."/>
            <person name="Schwartz J.R."/>
            <person name="Shinn P."/>
            <person name="Southwick A.M."/>
            <person name="Sun H."/>
            <person name="Tallon L.J."/>
            <person name="Tambunga G."/>
            <person name="Toriumi M.J."/>
            <person name="Town C.D."/>
            <person name="Utterback T."/>
            <person name="Van Aken S."/>
            <person name="Vaysberg M."/>
            <person name="Vysotskaia V.S."/>
            <person name="Walker M."/>
            <person name="Wu D."/>
            <person name="Yu G."/>
            <person name="Fraser C.M."/>
            <person name="Venter J.C."/>
            <person name="Davis R.W."/>
        </authorList>
    </citation>
    <scope>NUCLEOTIDE SEQUENCE [LARGE SCALE GENOMIC DNA]</scope>
    <source>
        <strain>cv. Columbia</strain>
    </source>
</reference>
<reference key="2">
    <citation type="journal article" date="2017" name="Plant J.">
        <title>Araport11: a complete reannotation of the Arabidopsis thaliana reference genome.</title>
        <authorList>
            <person name="Cheng C.Y."/>
            <person name="Krishnakumar V."/>
            <person name="Chan A.P."/>
            <person name="Thibaud-Nissen F."/>
            <person name="Schobel S."/>
            <person name="Town C.D."/>
        </authorList>
    </citation>
    <scope>GENOME REANNOTATION</scope>
    <source>
        <strain>cv. Columbia</strain>
    </source>
</reference>
<reference key="3">
    <citation type="journal article" date="2003" name="Science">
        <title>Empirical analysis of transcriptional activity in the Arabidopsis genome.</title>
        <authorList>
            <person name="Yamada K."/>
            <person name="Lim J."/>
            <person name="Dale J.M."/>
            <person name="Chen H."/>
            <person name="Shinn P."/>
            <person name="Palm C.J."/>
            <person name="Southwick A.M."/>
            <person name="Wu H.C."/>
            <person name="Kim C.J."/>
            <person name="Nguyen M."/>
            <person name="Pham P.K."/>
            <person name="Cheuk R.F."/>
            <person name="Karlin-Newmann G."/>
            <person name="Liu S.X."/>
            <person name="Lam B."/>
            <person name="Sakano H."/>
            <person name="Wu T."/>
            <person name="Yu G."/>
            <person name="Miranda M."/>
            <person name="Quach H.L."/>
            <person name="Tripp M."/>
            <person name="Chang C.H."/>
            <person name="Lee J.M."/>
            <person name="Toriumi M.J."/>
            <person name="Chan M.M."/>
            <person name="Tang C.C."/>
            <person name="Onodera C.S."/>
            <person name="Deng J.M."/>
            <person name="Akiyama K."/>
            <person name="Ansari Y."/>
            <person name="Arakawa T."/>
            <person name="Banh J."/>
            <person name="Banno F."/>
            <person name="Bowser L."/>
            <person name="Brooks S.Y."/>
            <person name="Carninci P."/>
            <person name="Chao Q."/>
            <person name="Choy N."/>
            <person name="Enju A."/>
            <person name="Goldsmith A.D."/>
            <person name="Gurjal M."/>
            <person name="Hansen N.F."/>
            <person name="Hayashizaki Y."/>
            <person name="Johnson-Hopson C."/>
            <person name="Hsuan V.W."/>
            <person name="Iida K."/>
            <person name="Karnes M."/>
            <person name="Khan S."/>
            <person name="Koesema E."/>
            <person name="Ishida J."/>
            <person name="Jiang P.X."/>
            <person name="Jones T."/>
            <person name="Kawai J."/>
            <person name="Kamiya A."/>
            <person name="Meyers C."/>
            <person name="Nakajima M."/>
            <person name="Narusaka M."/>
            <person name="Seki M."/>
            <person name="Sakurai T."/>
            <person name="Satou M."/>
            <person name="Tamse R."/>
            <person name="Vaysberg M."/>
            <person name="Wallender E.K."/>
            <person name="Wong C."/>
            <person name="Yamamura Y."/>
            <person name="Yuan S."/>
            <person name="Shinozaki K."/>
            <person name="Davis R.W."/>
            <person name="Theologis A."/>
            <person name="Ecker J.R."/>
        </authorList>
    </citation>
    <scope>NUCLEOTIDE SEQUENCE [LARGE SCALE MRNA]</scope>
    <source>
        <strain>cv. Columbia</strain>
    </source>
</reference>
<reference key="4">
    <citation type="journal article" date="1994" name="Plant Mol. Biol.">
        <title>Characterisation of cDNA and genomic clones encoding homologues of the 65 kDa regulatory subunit of protein phosphatase 2A in Arabidopsis thaliana.</title>
        <authorList>
            <person name="Slabas A.R."/>
            <person name="Fordham-Skelton A.P."/>
            <person name="Fletcher D."/>
            <person name="Martinez-Rivas J.M."/>
            <person name="Swinhoe R."/>
            <person name="Croy R.R.D."/>
            <person name="Evans I.M."/>
        </authorList>
    </citation>
    <scope>NUCLEOTIDE SEQUENCE [MRNA] OF 80-587</scope>
    <source>
        <strain>cv. Landsberg erecta</strain>
        <tissue>Leaf</tissue>
    </source>
</reference>
<reference key="5">
    <citation type="journal article" date="2004" name="Plant Cell">
        <title>Disparate roles for the regulatory A subunit isoforms in Arabidopsis protein phosphatase 2A.</title>
        <authorList>
            <person name="Zhou H.-W."/>
            <person name="Nussbaumer C."/>
            <person name="Chao Y."/>
            <person name="DeLong A."/>
        </authorList>
    </citation>
    <scope>FUNCTION</scope>
    <scope>TISSUE SPECIFICITY</scope>
</reference>
<reference key="6">
    <citation type="journal article" date="2005" name="Plant Physiol.">
        <title>Genome-wide identification and testing of superior reference genes for transcript normalization in Arabidopsis.</title>
        <authorList>
            <person name="Czechowski T."/>
            <person name="Stitt M."/>
            <person name="Altmann T."/>
            <person name="Udvardi M.K."/>
            <person name="Scheible W.R."/>
        </authorList>
    </citation>
    <scope>TISSUE SPECIFICITY</scope>
</reference>
<reference key="7">
    <citation type="journal article" date="2006" name="Plant J.">
        <title>AtCHIP functions as an E3 ubiquitin ligase of protein phosphatase 2A subunits and alters plant response to abscisic acid treatment.</title>
        <authorList>
            <person name="Luo J."/>
            <person name="Shen G."/>
            <person name="Yan J."/>
            <person name="He C."/>
            <person name="Zhang H."/>
        </authorList>
    </citation>
    <scope>INTERACTION WITH CHIP</scope>
    <scope>PTM</scope>
</reference>
<reference key="8">
    <citation type="journal article" date="2012" name="Mol. Cell. Proteomics">
        <title>Comparative large-scale characterisation of plant vs. mammal proteins reveals similar and idiosyncratic N-alpha acetylation features.</title>
        <authorList>
            <person name="Bienvenut W.V."/>
            <person name="Sumpton D."/>
            <person name="Martinez A."/>
            <person name="Lilla S."/>
            <person name="Espagne C."/>
            <person name="Meinnel T."/>
            <person name="Giglione C."/>
        </authorList>
    </citation>
    <scope>ACETYLATION [LARGE SCALE ANALYSIS] AT SER-2</scope>
    <scope>CLEAVAGE OF INITIATOR METHIONINE [LARGE SCALE ANALYSIS]</scope>
    <scope>IDENTIFICATION BY MASS SPECTROMETRY [LARGE SCALE ANALYSIS]</scope>
</reference>
<reference key="9">
    <citation type="journal article" date="2012" name="Plant J.">
        <title>Arabidopsis thaliana histone deacetylase 14 (HDA14) is an alpha-tubulin deacetylase that associates with PP2A and enriches in the microtubule fraction with the putative histone acetyltransferase ELP3.</title>
        <authorList>
            <person name="Tran H.T."/>
            <person name="Nimick M."/>
            <person name="Uhrig R.G."/>
            <person name="Templeton G."/>
            <person name="Morrice N."/>
            <person name="Gourlay R."/>
            <person name="DeLong A."/>
            <person name="Moorhead G.B."/>
        </authorList>
    </citation>
    <scope>SUBCELLULAR LOCATION</scope>
</reference>
<reference key="10">
    <citation type="journal article" date="2015" name="Plant Physiol.">
        <title>Identification of Open Stomata1-interacting proteins reveals interactions with sucrose non-fermenting1-related protein kinases2 and with type 2a protein phosphatases that function in abscisic acid responses.</title>
        <authorList>
            <person name="Waadt R."/>
            <person name="Manalansan B."/>
            <person name="Rauniyar N."/>
            <person name="Munemasa S."/>
            <person name="Booker M.A."/>
            <person name="Brandt B."/>
            <person name="Waadt C."/>
            <person name="Nusinow D.A."/>
            <person name="Kay S.A."/>
            <person name="Kunz H.H."/>
            <person name="Schumacher K."/>
            <person name="DeLong A."/>
            <person name="Yates J.R. III"/>
            <person name="Schroeder J.I."/>
        </authorList>
    </citation>
    <scope>IDENTIFICATION BY MASS SPECTROMETRY</scope>
    <scope>INTERACTION WITH SRK2E/OST1</scope>
</reference>
<sequence>MSMVDEPLYPIAVLIDELKNDDIQRRLNSIKRLSIIARALGEERTRKELIPFLSENNDDDDEVLLAMAEELGGFILYVGGVEYAYVLLPPLETLSTVEETCVREKAVDSLCRIGAQMRESDLVEHFTPLAKRLSAGEWFTARVSACGIFHIAYPSAPDVLKTELRSIYGQLCQDDMPMVRRAAATNLGKFAATIESAHLKTDIMSMFEDLTQDDQDSVRLLAVEGCAALGKLLEPQDCVAHILPVIVNFSQDKSWRVRYMVANQLYELCEAVGPEPTRTDLVPAYARLLCDNEAEVRIAAAGKVTKFCRILNPELAIQHILPCVKELSSDSSQHVRSALASVIMGMAPVLGKDATIEHLLPIFLSLLKDEFPDVRLNIISKLDQVNQVIGIDLLSQSLLPAIVELAEDRHWRVRLAIIEYIPLLASQLGVGFFDEKLGALCMQWLQDKVHSIREAAANNLKRLAEEFGPEWAMQHIVPQVLEMINNPHYLYRMTILRAVSLLAPVMGSEITCSKLLPAVITASKDRVPNIKFNVAKMMQSLIPIVDQAVVENMIRPCLVELSEDPDVDVRYFANQALQSIDNVMMSS</sequence>
<organism>
    <name type="scientific">Arabidopsis thaliana</name>
    <name type="common">Mouse-ear cress</name>
    <dbReference type="NCBI Taxonomy" id="3702"/>
    <lineage>
        <taxon>Eukaryota</taxon>
        <taxon>Viridiplantae</taxon>
        <taxon>Streptophyta</taxon>
        <taxon>Embryophyta</taxon>
        <taxon>Tracheophyta</taxon>
        <taxon>Spermatophyta</taxon>
        <taxon>Magnoliopsida</taxon>
        <taxon>eudicotyledons</taxon>
        <taxon>Gunneridae</taxon>
        <taxon>Pentapetalae</taxon>
        <taxon>rosids</taxon>
        <taxon>malvids</taxon>
        <taxon>Brassicales</taxon>
        <taxon>Brassicaceae</taxon>
        <taxon>Camelineae</taxon>
        <taxon>Arabidopsis</taxon>
    </lineage>
</organism>
<proteinExistence type="evidence at protein level"/>
<name>2AAG_ARATH</name>